<organism>
    <name type="scientific">Shigella flexneri</name>
    <dbReference type="NCBI Taxonomy" id="623"/>
    <lineage>
        <taxon>Bacteria</taxon>
        <taxon>Pseudomonadati</taxon>
        <taxon>Pseudomonadota</taxon>
        <taxon>Gammaproteobacteria</taxon>
        <taxon>Enterobacterales</taxon>
        <taxon>Enterobacteriaceae</taxon>
        <taxon>Shigella</taxon>
    </lineage>
</organism>
<protein>
    <recommendedName>
        <fullName>cAMP-activated global transcriptional regulator CRP</fullName>
    </recommendedName>
    <alternativeName>
        <fullName>Catabolite activator protein</fullName>
        <shortName>CAP</shortName>
    </alternativeName>
    <alternativeName>
        <fullName>Catabolite gene activator</fullName>
    </alternativeName>
    <alternativeName>
        <fullName>cAMP receptor protein</fullName>
        <shortName>CRP</shortName>
    </alternativeName>
    <alternativeName>
        <fullName>cAMP regulatory protein</fullName>
    </alternativeName>
</protein>
<accession>P0ACK1</accession>
<accession>P03020</accession>
<name>CRP_SHIFL</name>
<proteinExistence type="inferred from homology"/>
<gene>
    <name type="primary">crp</name>
    <name type="ordered locus">SF3376</name>
    <name type="ordered locus">S4387</name>
</gene>
<sequence>MVLGKPQTDPTLEWFLSHCHIHKYPSKSTLIHQGEKAETLYYIVKGSVAVLIKDEEGKEMILSYLNQGDFIGELGLFEEGQERSAWVRAKTACEVAEISYKKFRQLIQVNPDILMRLSAQMARRLQVTSEKVGNLAFLDVTGRIAQTLLNLAKQPDAMTHPDGMQIKITRQEIGQIVGCSRETVGRILKMLEDQNLISAHGKTIVVYGTR</sequence>
<evidence type="ECO:0000250" key="1"/>
<evidence type="ECO:0000255" key="2">
    <source>
        <dbReference type="PROSITE-ProRule" id="PRU00387"/>
    </source>
</evidence>
<feature type="chain" id="PRO_0000100151" description="cAMP-activated global transcriptional regulator CRP">
    <location>
        <begin position="1"/>
        <end position="210"/>
    </location>
</feature>
<feature type="domain" description="HTH crp-type" evidence="2">
    <location>
        <begin position="138"/>
        <end position="210"/>
    </location>
</feature>
<feature type="DNA-binding region" description="H-T-H motif" evidence="2">
    <location>
        <begin position="180"/>
        <end position="186"/>
    </location>
</feature>
<feature type="region of interest" description="Activating region 2 (AR2); probably contacts the N-terminus of RpoA" evidence="1">
    <location>
        <begin position="20"/>
        <end position="22"/>
    </location>
</feature>
<feature type="region of interest" description="Activating region 3 (AR3); probably contacts sigma-70 (RpoD)" evidence="1">
    <location>
        <begin position="53"/>
        <end position="59"/>
    </location>
</feature>
<feature type="region of interest" description="Activating region 1 (AR1); probably contacts the C-terminus of RpoA" evidence="1">
    <location>
        <begin position="154"/>
        <end position="163"/>
    </location>
</feature>
<feature type="binding site" evidence="1">
    <location>
        <begin position="57"/>
        <end position="63"/>
    </location>
    <ligand>
        <name>3',5'-cyclic AMP</name>
        <dbReference type="ChEBI" id="CHEBI:58165"/>
        <label>1</label>
    </ligand>
</feature>
<feature type="binding site" evidence="1">
    <location>
        <begin position="72"/>
        <end position="74"/>
    </location>
    <ligand>
        <name>3',5'-cyclic AMP</name>
        <dbReference type="ChEBI" id="CHEBI:58165"/>
        <label>1</label>
    </ligand>
</feature>
<feature type="binding site" evidence="1">
    <location>
        <begin position="83"/>
        <end position="84"/>
    </location>
    <ligand>
        <name>3',5'-cyclic AMP</name>
        <dbReference type="ChEBI" id="CHEBI:58165"/>
        <label>1</label>
    </ligand>
</feature>
<feature type="binding site" evidence="1">
    <location>
        <begin position="128"/>
        <end position="129"/>
    </location>
    <ligand>
        <name>3',5'-cyclic AMP</name>
        <dbReference type="ChEBI" id="CHEBI:58165"/>
        <label>1</label>
    </ligand>
</feature>
<feature type="binding site" evidence="1">
    <location>
        <begin position="136"/>
        <end position="137"/>
    </location>
    <ligand>
        <name>3',5'-cyclic AMP</name>
        <dbReference type="ChEBI" id="CHEBI:58165"/>
        <label>2</label>
    </ligand>
</feature>
<feature type="binding site" evidence="1">
    <location>
        <begin position="171"/>
        <end position="181"/>
    </location>
    <ligand>
        <name>3',5'-cyclic AMP</name>
        <dbReference type="ChEBI" id="CHEBI:58165"/>
        <label>2</label>
    </ligand>
</feature>
<feature type="site" description="Activating region 2 (AR2); probably contacts the N-terminus of RpoA" evidence="1">
    <location>
        <position position="97"/>
    </location>
</feature>
<feature type="site" description="Activating region 2 (AR2); probably contacts the N-terminus of RpoA" evidence="1">
    <location>
        <position position="102"/>
    </location>
</feature>
<feature type="modified residue" description="N6-acetyllysine" evidence="1">
    <location>
        <position position="101"/>
    </location>
</feature>
<keyword id="KW-0007">Acetylation</keyword>
<keyword id="KW-0010">Activator</keyword>
<keyword id="KW-0114">cAMP</keyword>
<keyword id="KW-0116">cAMP-binding</keyword>
<keyword id="KW-0238">DNA-binding</keyword>
<keyword id="KW-0547">Nucleotide-binding</keyword>
<keyword id="KW-1185">Reference proteome</keyword>
<keyword id="KW-0804">Transcription</keyword>
<keyword id="KW-0805">Transcription regulation</keyword>
<reference key="1">
    <citation type="journal article" date="1986" name="J. Bacteriol.">
        <title>crp genes of Shigella flexneri, Salmonella typhimurium, and Escherichia coli.</title>
        <authorList>
            <person name="Cossart P."/>
            <person name="Groisman E.A."/>
            <person name="Serre M.-C."/>
            <person name="Casadaban M.J."/>
            <person name="Gicquel-Sanzey B."/>
        </authorList>
    </citation>
    <scope>NUCLEOTIDE SEQUENCE [GENOMIC DNA]</scope>
    <source>
        <strain>ATCC 12022 / CDC 3591-52 / Serotype 2b</strain>
    </source>
</reference>
<reference key="2">
    <citation type="journal article" date="2002" name="Nucleic Acids Res.">
        <title>Genome sequence of Shigella flexneri 2a: insights into pathogenicity through comparison with genomes of Escherichia coli K12 and O157.</title>
        <authorList>
            <person name="Jin Q."/>
            <person name="Yuan Z."/>
            <person name="Xu J."/>
            <person name="Wang Y."/>
            <person name="Shen Y."/>
            <person name="Lu W."/>
            <person name="Wang J."/>
            <person name="Liu H."/>
            <person name="Yang J."/>
            <person name="Yang F."/>
            <person name="Zhang X."/>
            <person name="Zhang J."/>
            <person name="Yang G."/>
            <person name="Wu H."/>
            <person name="Qu D."/>
            <person name="Dong J."/>
            <person name="Sun L."/>
            <person name="Xue Y."/>
            <person name="Zhao A."/>
            <person name="Gao Y."/>
            <person name="Zhu J."/>
            <person name="Kan B."/>
            <person name="Ding K."/>
            <person name="Chen S."/>
            <person name="Cheng H."/>
            <person name="Yao Z."/>
            <person name="He B."/>
            <person name="Chen R."/>
            <person name="Ma D."/>
            <person name="Qiang B."/>
            <person name="Wen Y."/>
            <person name="Hou Y."/>
            <person name="Yu J."/>
        </authorList>
    </citation>
    <scope>NUCLEOTIDE SEQUENCE [LARGE SCALE GENOMIC DNA]</scope>
    <source>
        <strain>301 / Serotype 2a</strain>
    </source>
</reference>
<reference key="3">
    <citation type="journal article" date="2003" name="Infect. Immun.">
        <title>Complete genome sequence and comparative genomics of Shigella flexneri serotype 2a strain 2457T.</title>
        <authorList>
            <person name="Wei J."/>
            <person name="Goldberg M.B."/>
            <person name="Burland V."/>
            <person name="Venkatesan M.M."/>
            <person name="Deng W."/>
            <person name="Fournier G."/>
            <person name="Mayhew G.F."/>
            <person name="Plunkett G. III"/>
            <person name="Rose D.J."/>
            <person name="Darling A."/>
            <person name="Mau B."/>
            <person name="Perna N.T."/>
            <person name="Payne S.M."/>
            <person name="Runyen-Janecky L.J."/>
            <person name="Zhou S."/>
            <person name="Schwartz D.C."/>
            <person name="Blattner F.R."/>
        </authorList>
    </citation>
    <scope>NUCLEOTIDE SEQUENCE [LARGE SCALE GENOMIC DNA]</scope>
    <source>
        <strain>ATCC 700930 / 2457T / Serotype 2a</strain>
    </source>
</reference>
<comment type="function">
    <text evidence="1">A global transcription regulator. Complexes with cyclic AMP (cAMP) which allosterically activates DNA binding to regulate transcription. It can act as an activator, repressor, coactivator or corepressor. Induces a severe bend in DNA. Acts as a negative regulator of its own synthesis as well as for adenylate cyclase (cyaA), which generates cAMP. Plays a major role in carbon catabolite repression (CCR) (By similarity).</text>
</comment>
<comment type="subunit">
    <text evidence="1">Homodimer, which upon binding cAMP is able to bind DNA. Binds the N- and C-terminus of RNA polymerase subunit RpoA and sigma-70 (RpoD) (By similarity).</text>
</comment>
<comment type="domain">
    <text evidence="1">The N-terminal domain binds cAMP and is responsible for homodimerization, while the C-terminal domain binds DNA when cAMP is bound.</text>
</comment>
<dbReference type="EMBL" id="M13772">
    <property type="protein sequence ID" value="AAA26515.1"/>
    <property type="molecule type" value="Genomic_DNA"/>
</dbReference>
<dbReference type="EMBL" id="AE005674">
    <property type="protein sequence ID" value="AAN44839.1"/>
    <property type="molecule type" value="Genomic_DNA"/>
</dbReference>
<dbReference type="EMBL" id="AE014073">
    <property type="protein sequence ID" value="AAP19339.1"/>
    <property type="molecule type" value="Genomic_DNA"/>
</dbReference>
<dbReference type="RefSeq" id="NP_709132.1">
    <property type="nucleotide sequence ID" value="NC_004337.2"/>
</dbReference>
<dbReference type="RefSeq" id="WP_000242755.1">
    <property type="nucleotide sequence ID" value="NZ_WPGW01000003.1"/>
</dbReference>
<dbReference type="SMR" id="P0ACK1"/>
<dbReference type="STRING" id="198214.SF3376"/>
<dbReference type="PaxDb" id="198214-SF3376"/>
<dbReference type="GeneID" id="1026956"/>
<dbReference type="GeneID" id="93122175"/>
<dbReference type="KEGG" id="sfl:SF3376"/>
<dbReference type="KEGG" id="sfx:S4387"/>
<dbReference type="PATRIC" id="fig|198214.7.peg.3986"/>
<dbReference type="HOGENOM" id="CLU_075053_3_5_6"/>
<dbReference type="Proteomes" id="UP000001006">
    <property type="component" value="Chromosome"/>
</dbReference>
<dbReference type="Proteomes" id="UP000002673">
    <property type="component" value="Chromosome"/>
</dbReference>
<dbReference type="GO" id="GO:0005829">
    <property type="term" value="C:cytosol"/>
    <property type="evidence" value="ECO:0007669"/>
    <property type="project" value="TreeGrafter"/>
</dbReference>
<dbReference type="GO" id="GO:0030552">
    <property type="term" value="F:cAMP binding"/>
    <property type="evidence" value="ECO:0007669"/>
    <property type="project" value="UniProtKB-KW"/>
</dbReference>
<dbReference type="GO" id="GO:0003677">
    <property type="term" value="F:DNA binding"/>
    <property type="evidence" value="ECO:0007669"/>
    <property type="project" value="UniProtKB-KW"/>
</dbReference>
<dbReference type="GO" id="GO:0003700">
    <property type="term" value="F:DNA-binding transcription factor activity"/>
    <property type="evidence" value="ECO:0007669"/>
    <property type="project" value="InterPro"/>
</dbReference>
<dbReference type="CDD" id="cd00038">
    <property type="entry name" value="CAP_ED"/>
    <property type="match status" value="1"/>
</dbReference>
<dbReference type="CDD" id="cd00092">
    <property type="entry name" value="HTH_CRP"/>
    <property type="match status" value="1"/>
</dbReference>
<dbReference type="FunFam" id="1.10.10.10:FF:000006">
    <property type="entry name" value="cAMP-activated global transcriptional regulator CRP"/>
    <property type="match status" value="1"/>
</dbReference>
<dbReference type="FunFam" id="2.60.120.10:FF:000001">
    <property type="entry name" value="cAMP-activated global transcriptional regulator CRP"/>
    <property type="match status" value="1"/>
</dbReference>
<dbReference type="Gene3D" id="2.60.120.10">
    <property type="entry name" value="Jelly Rolls"/>
    <property type="match status" value="1"/>
</dbReference>
<dbReference type="Gene3D" id="1.10.10.10">
    <property type="entry name" value="Winged helix-like DNA-binding domain superfamily/Winged helix DNA-binding domain"/>
    <property type="match status" value="1"/>
</dbReference>
<dbReference type="InterPro" id="IPR018488">
    <property type="entry name" value="cNMP-bd_CS"/>
</dbReference>
<dbReference type="InterPro" id="IPR000595">
    <property type="entry name" value="cNMP-bd_dom"/>
</dbReference>
<dbReference type="InterPro" id="IPR018490">
    <property type="entry name" value="cNMP-bd_dom_sf"/>
</dbReference>
<dbReference type="InterPro" id="IPR050397">
    <property type="entry name" value="Env_Response_Regulators"/>
</dbReference>
<dbReference type="InterPro" id="IPR012318">
    <property type="entry name" value="HTH_CRP"/>
</dbReference>
<dbReference type="InterPro" id="IPR014710">
    <property type="entry name" value="RmlC-like_jellyroll"/>
</dbReference>
<dbReference type="InterPro" id="IPR018335">
    <property type="entry name" value="Tscrpt_reg_HTH_Crp-type_CS"/>
</dbReference>
<dbReference type="InterPro" id="IPR036388">
    <property type="entry name" value="WH-like_DNA-bd_sf"/>
</dbReference>
<dbReference type="InterPro" id="IPR036390">
    <property type="entry name" value="WH_DNA-bd_sf"/>
</dbReference>
<dbReference type="NCBIfam" id="NF008732">
    <property type="entry name" value="PRK11753.1"/>
    <property type="match status" value="1"/>
</dbReference>
<dbReference type="PANTHER" id="PTHR24567">
    <property type="entry name" value="CRP FAMILY TRANSCRIPTIONAL REGULATORY PROTEIN"/>
    <property type="match status" value="1"/>
</dbReference>
<dbReference type="PANTHER" id="PTHR24567:SF68">
    <property type="entry name" value="DNA-BINDING TRANSCRIPTIONAL DUAL REGULATOR CRP"/>
    <property type="match status" value="1"/>
</dbReference>
<dbReference type="Pfam" id="PF00027">
    <property type="entry name" value="cNMP_binding"/>
    <property type="match status" value="1"/>
</dbReference>
<dbReference type="Pfam" id="PF13545">
    <property type="entry name" value="HTH_Crp_2"/>
    <property type="match status" value="1"/>
</dbReference>
<dbReference type="PRINTS" id="PR00034">
    <property type="entry name" value="HTHCRP"/>
</dbReference>
<dbReference type="SMART" id="SM00100">
    <property type="entry name" value="cNMP"/>
    <property type="match status" value="1"/>
</dbReference>
<dbReference type="SMART" id="SM00419">
    <property type="entry name" value="HTH_CRP"/>
    <property type="match status" value="1"/>
</dbReference>
<dbReference type="SUPFAM" id="SSF51206">
    <property type="entry name" value="cAMP-binding domain-like"/>
    <property type="match status" value="1"/>
</dbReference>
<dbReference type="SUPFAM" id="SSF46785">
    <property type="entry name" value="Winged helix' DNA-binding domain"/>
    <property type="match status" value="1"/>
</dbReference>
<dbReference type="PROSITE" id="PS00888">
    <property type="entry name" value="CNMP_BINDING_1"/>
    <property type="match status" value="1"/>
</dbReference>
<dbReference type="PROSITE" id="PS00889">
    <property type="entry name" value="CNMP_BINDING_2"/>
    <property type="match status" value="1"/>
</dbReference>
<dbReference type="PROSITE" id="PS50042">
    <property type="entry name" value="CNMP_BINDING_3"/>
    <property type="match status" value="1"/>
</dbReference>
<dbReference type="PROSITE" id="PS00042">
    <property type="entry name" value="HTH_CRP_1"/>
    <property type="match status" value="1"/>
</dbReference>
<dbReference type="PROSITE" id="PS51063">
    <property type="entry name" value="HTH_CRP_2"/>
    <property type="match status" value="1"/>
</dbReference>